<dbReference type="EC" id="6.3.2.1" evidence="1"/>
<dbReference type="EMBL" id="AJ007446">
    <property type="protein sequence ID" value="CAA07518.1"/>
    <property type="molecule type" value="Genomic_DNA"/>
</dbReference>
<dbReference type="SMR" id="O86953"/>
<dbReference type="UniPathway" id="UPA00028">
    <property type="reaction ID" value="UER00005"/>
</dbReference>
<dbReference type="GO" id="GO:0005829">
    <property type="term" value="C:cytosol"/>
    <property type="evidence" value="ECO:0007669"/>
    <property type="project" value="TreeGrafter"/>
</dbReference>
<dbReference type="GO" id="GO:0005524">
    <property type="term" value="F:ATP binding"/>
    <property type="evidence" value="ECO:0007669"/>
    <property type="project" value="UniProtKB-KW"/>
</dbReference>
<dbReference type="GO" id="GO:0004592">
    <property type="term" value="F:pantoate-beta-alanine ligase activity"/>
    <property type="evidence" value="ECO:0007669"/>
    <property type="project" value="UniProtKB-UniRule"/>
</dbReference>
<dbReference type="GO" id="GO:0015940">
    <property type="term" value="P:pantothenate biosynthetic process"/>
    <property type="evidence" value="ECO:0007669"/>
    <property type="project" value="UniProtKB-UniRule"/>
</dbReference>
<dbReference type="CDD" id="cd00560">
    <property type="entry name" value="PanC"/>
    <property type="match status" value="1"/>
</dbReference>
<dbReference type="FunFam" id="3.30.1300.10:FF:000001">
    <property type="entry name" value="Pantothenate synthetase"/>
    <property type="match status" value="1"/>
</dbReference>
<dbReference type="FunFam" id="3.40.50.620:FF:000013">
    <property type="entry name" value="Pantothenate synthetase"/>
    <property type="match status" value="1"/>
</dbReference>
<dbReference type="Gene3D" id="3.40.50.620">
    <property type="entry name" value="HUPs"/>
    <property type="match status" value="1"/>
</dbReference>
<dbReference type="Gene3D" id="3.30.1300.10">
    <property type="entry name" value="Pantoate-beta-alanine ligase, C-terminal domain"/>
    <property type="match status" value="1"/>
</dbReference>
<dbReference type="HAMAP" id="MF_00158">
    <property type="entry name" value="PanC"/>
    <property type="match status" value="1"/>
</dbReference>
<dbReference type="InterPro" id="IPR004821">
    <property type="entry name" value="Cyt_trans-like"/>
</dbReference>
<dbReference type="InterPro" id="IPR003721">
    <property type="entry name" value="Pantoate_ligase"/>
</dbReference>
<dbReference type="InterPro" id="IPR042176">
    <property type="entry name" value="Pantoate_ligase_C"/>
</dbReference>
<dbReference type="InterPro" id="IPR014729">
    <property type="entry name" value="Rossmann-like_a/b/a_fold"/>
</dbReference>
<dbReference type="NCBIfam" id="TIGR00125">
    <property type="entry name" value="cyt_tran_rel"/>
    <property type="match status" value="1"/>
</dbReference>
<dbReference type="NCBIfam" id="TIGR00018">
    <property type="entry name" value="panC"/>
    <property type="match status" value="1"/>
</dbReference>
<dbReference type="PANTHER" id="PTHR21299">
    <property type="entry name" value="CYTIDYLATE KINASE/PANTOATE-BETA-ALANINE LIGASE"/>
    <property type="match status" value="1"/>
</dbReference>
<dbReference type="PANTHER" id="PTHR21299:SF1">
    <property type="entry name" value="PANTOATE--BETA-ALANINE LIGASE"/>
    <property type="match status" value="1"/>
</dbReference>
<dbReference type="Pfam" id="PF02569">
    <property type="entry name" value="Pantoate_ligase"/>
    <property type="match status" value="1"/>
</dbReference>
<dbReference type="SUPFAM" id="SSF52374">
    <property type="entry name" value="Nucleotidylyl transferase"/>
    <property type="match status" value="1"/>
</dbReference>
<gene>
    <name evidence="1" type="primary">panC</name>
</gene>
<keyword id="KW-0067">ATP-binding</keyword>
<keyword id="KW-0963">Cytoplasm</keyword>
<keyword id="KW-0436">Ligase</keyword>
<keyword id="KW-0547">Nucleotide-binding</keyword>
<keyword id="KW-0566">Pantothenate biosynthesis</keyword>
<comment type="function">
    <text evidence="1">Catalyzes the condensation of pantoate with beta-alanine in an ATP-dependent reaction via a pantoyl-adenylate intermediate.</text>
</comment>
<comment type="catalytic activity">
    <reaction evidence="1">
        <text>(R)-pantoate + beta-alanine + ATP = (R)-pantothenate + AMP + diphosphate + H(+)</text>
        <dbReference type="Rhea" id="RHEA:10912"/>
        <dbReference type="ChEBI" id="CHEBI:15378"/>
        <dbReference type="ChEBI" id="CHEBI:15980"/>
        <dbReference type="ChEBI" id="CHEBI:29032"/>
        <dbReference type="ChEBI" id="CHEBI:30616"/>
        <dbReference type="ChEBI" id="CHEBI:33019"/>
        <dbReference type="ChEBI" id="CHEBI:57966"/>
        <dbReference type="ChEBI" id="CHEBI:456215"/>
        <dbReference type="EC" id="6.3.2.1"/>
    </reaction>
</comment>
<comment type="pathway">
    <text evidence="1">Cofactor biosynthesis; (R)-pantothenate biosynthesis; (R)-pantothenate from (R)-pantoate and beta-alanine: step 1/1.</text>
</comment>
<comment type="subunit">
    <text evidence="1">Homodimer.</text>
</comment>
<comment type="subcellular location">
    <subcellularLocation>
        <location evidence="1">Cytoplasm</location>
    </subcellularLocation>
</comment>
<comment type="miscellaneous">
    <text evidence="1">The reaction proceeds by a bi uni uni bi ping pong mechanism.</text>
</comment>
<comment type="similarity">
    <text evidence="1">Belongs to the pantothenate synthetase family.</text>
</comment>
<reference key="1">
    <citation type="submission" date="1998-06" db="EMBL/GenBank/DDBJ databases">
        <authorList>
            <person name="Zverlov V.V."/>
        </authorList>
    </citation>
    <scope>NUCLEOTIDE SEQUENCE [GENOMIC DNA]</scope>
    <source>
        <strain>Z2706-MC24</strain>
    </source>
</reference>
<evidence type="ECO:0000255" key="1">
    <source>
        <dbReference type="HAMAP-Rule" id="MF_00158"/>
    </source>
</evidence>
<name>PANC_THENE</name>
<accession>O86953</accession>
<feature type="chain" id="PRO_0000128281" description="Pantothenate synthetase">
    <location>
        <begin position="1"/>
        <end position="280"/>
    </location>
</feature>
<feature type="active site" description="Proton donor" evidence="1">
    <location>
        <position position="37"/>
    </location>
</feature>
<feature type="binding site" evidence="1">
    <location>
        <begin position="30"/>
        <end position="37"/>
    </location>
    <ligand>
        <name>ATP</name>
        <dbReference type="ChEBI" id="CHEBI:30616"/>
    </ligand>
</feature>
<feature type="binding site" evidence="1">
    <location>
        <position position="61"/>
    </location>
    <ligand>
        <name>(R)-pantoate</name>
        <dbReference type="ChEBI" id="CHEBI:15980"/>
    </ligand>
</feature>
<feature type="binding site" evidence="1">
    <location>
        <position position="61"/>
    </location>
    <ligand>
        <name>beta-alanine</name>
        <dbReference type="ChEBI" id="CHEBI:57966"/>
    </ligand>
</feature>
<feature type="binding site" evidence="1">
    <location>
        <begin position="147"/>
        <end position="150"/>
    </location>
    <ligand>
        <name>ATP</name>
        <dbReference type="ChEBI" id="CHEBI:30616"/>
    </ligand>
</feature>
<feature type="binding site" evidence="1">
    <location>
        <position position="153"/>
    </location>
    <ligand>
        <name>(R)-pantoate</name>
        <dbReference type="ChEBI" id="CHEBI:15980"/>
    </ligand>
</feature>
<feature type="binding site" evidence="1">
    <location>
        <position position="176"/>
    </location>
    <ligand>
        <name>ATP</name>
        <dbReference type="ChEBI" id="CHEBI:30616"/>
    </ligand>
</feature>
<feature type="binding site" evidence="1">
    <location>
        <begin position="184"/>
        <end position="187"/>
    </location>
    <ligand>
        <name>ATP</name>
        <dbReference type="ChEBI" id="CHEBI:30616"/>
    </ligand>
</feature>
<protein>
    <recommendedName>
        <fullName evidence="1">Pantothenate synthetase</fullName>
        <shortName evidence="1">PS</shortName>
        <ecNumber evidence="1">6.3.2.1</ecNumber>
    </recommendedName>
    <alternativeName>
        <fullName evidence="1">Pantoate--beta-alanine ligase</fullName>
    </alternativeName>
    <alternativeName>
        <fullName evidence="1">Pantoate-activating enzyme</fullName>
    </alternativeName>
</protein>
<proteinExistence type="inferred from homology"/>
<sequence>MRIIETIEEMKKFSEEMREKKKTIGFVPTMGYLHEGHLSLVRRARAENDVVVVSIFVNPTQFGPNEDYERYPRDFERDRKLLEKENVDCVFHPSVEEMYPPDFSTFVEETKLSKPLCGRSRPGHFRGVCTVVTKLFNIVKPHRAYFGQKDAQQFRVLRRMVRDLNMDVEMIECPIVREPDGLAMSSRNVYLTPEERKQALALYQSLKIAENLFLNGERDAVKIKEAMINHLSRFDRVKIDYVEIVDEETLEPVEKIDRKVIVAVAAWVGKARLIDNTILG</sequence>
<organism>
    <name type="scientific">Thermotoga neapolitana</name>
    <dbReference type="NCBI Taxonomy" id="2337"/>
    <lineage>
        <taxon>Bacteria</taxon>
        <taxon>Thermotogati</taxon>
        <taxon>Thermotogota</taxon>
        <taxon>Thermotogae</taxon>
        <taxon>Thermotogales</taxon>
        <taxon>Thermotogaceae</taxon>
        <taxon>Thermotoga</taxon>
    </lineage>
</organism>